<accession>Q979L4</accession>
<organism>
    <name type="scientific">Thermoplasma volcanium (strain ATCC 51530 / DSM 4299 / JCM 9571 / NBRC 15438 / GSS1)</name>
    <dbReference type="NCBI Taxonomy" id="273116"/>
    <lineage>
        <taxon>Archaea</taxon>
        <taxon>Methanobacteriati</taxon>
        <taxon>Thermoplasmatota</taxon>
        <taxon>Thermoplasmata</taxon>
        <taxon>Thermoplasmatales</taxon>
        <taxon>Thermoplasmataceae</taxon>
        <taxon>Thermoplasma</taxon>
    </lineage>
</organism>
<evidence type="ECO:0000255" key="1">
    <source>
        <dbReference type="HAMAP-Rule" id="MF_00288"/>
    </source>
</evidence>
<evidence type="ECO:0000305" key="2"/>
<gene>
    <name evidence="1" type="primary">metE</name>
    <name type="ordered locus">TV1147</name>
    <name type="ORF">TVG1176554</name>
</gene>
<keyword id="KW-0028">Amino-acid biosynthesis</keyword>
<keyword id="KW-0479">Metal-binding</keyword>
<keyword id="KW-0486">Methionine biosynthesis</keyword>
<keyword id="KW-0489">Methyltransferase</keyword>
<keyword id="KW-0808">Transferase</keyword>
<keyword id="KW-0862">Zinc</keyword>
<name>METE_THEVO</name>
<proteinExistence type="inferred from homology"/>
<sequence length="344" mass="40153">MAALITQEIGSFRKPEYLSMEFHKIEGTEKFKELAERATIDTLKIFENTGLDNVGIGGEMYRWEMYEHPAERIKGLIFYGMVRSFDNRYYRKGSVIDKIERRGSFHMDEVEFVAKSTKKPIKIPITGPYTMMDWSFNDHYNDRHELAMEFARIINEELKEIQSKWPYISNGRKLEIQIDEPATTTHPDEMDIVVDSVNKSIEGIDAELSLHVCYSRDYRLLYDRIPELNIDGYNLEYSNRDTTDLGVEDAKRPGFQDIKYFNEVNESLQRKKFIGVGVTDVHIDFIEPVKLIEDRIKYVLNIIKDPELVKLNPDCGLRTRSRSIGEQKLRNMVIAKNNVLKDIS</sequence>
<comment type="function">
    <text evidence="1">Catalyzes the transfer of a methyl group to L-homocysteine resulting in methionine formation. The physiological methyl donor is unknown.</text>
</comment>
<comment type="cofactor">
    <cofactor evidence="1">
        <name>Zn(2+)</name>
        <dbReference type="ChEBI" id="CHEBI:29105"/>
    </cofactor>
    <text evidence="1">Binds 1 zinc ion per subunit.</text>
</comment>
<comment type="pathway">
    <text evidence="1">Amino-acid biosynthesis; L-methionine biosynthesis via de novo pathway.</text>
</comment>
<comment type="similarity">
    <text evidence="1 2">Belongs to the archaeal MetE family.</text>
</comment>
<comment type="sequence caution" evidence="2">
    <conflict type="erroneous initiation">
        <sequence resource="EMBL-CDS" id="BAB60289"/>
    </conflict>
</comment>
<protein>
    <recommendedName>
        <fullName evidence="1">Methionine synthase</fullName>
        <ecNumber evidence="1">2.1.1.-</ecNumber>
    </recommendedName>
    <alternativeName>
        <fullName evidence="1">Homocysteine methyltransferase</fullName>
    </alternativeName>
</protein>
<feature type="chain" id="PRO_0000098695" description="Methionine synthase">
    <location>
        <begin position="1"/>
        <end position="344"/>
    </location>
</feature>
<feature type="binding site" evidence="1">
    <location>
        <position position="211"/>
    </location>
    <ligand>
        <name>Zn(2+)</name>
        <dbReference type="ChEBI" id="CHEBI:29105"/>
        <note>catalytic</note>
    </ligand>
</feature>
<feature type="binding site" evidence="1">
    <location>
        <position position="213"/>
    </location>
    <ligand>
        <name>Zn(2+)</name>
        <dbReference type="ChEBI" id="CHEBI:29105"/>
        <note>catalytic</note>
    </ligand>
</feature>
<feature type="binding site" evidence="1">
    <location>
        <position position="236"/>
    </location>
    <ligand>
        <name>Zn(2+)</name>
        <dbReference type="ChEBI" id="CHEBI:29105"/>
        <note>catalytic</note>
    </ligand>
</feature>
<feature type="binding site" evidence="1">
    <location>
        <position position="315"/>
    </location>
    <ligand>
        <name>Zn(2+)</name>
        <dbReference type="ChEBI" id="CHEBI:29105"/>
        <note>catalytic</note>
    </ligand>
</feature>
<reference key="1">
    <citation type="journal article" date="2000" name="Proc. Natl. Acad. Sci. U.S.A.">
        <title>Archaeal adaptation to higher temperatures revealed by genomic sequence of Thermoplasma volcanium.</title>
        <authorList>
            <person name="Kawashima T."/>
            <person name="Amano N."/>
            <person name="Koike H."/>
            <person name="Makino S."/>
            <person name="Higuchi S."/>
            <person name="Kawashima-Ohya Y."/>
            <person name="Watanabe K."/>
            <person name="Yamazaki M."/>
            <person name="Kanehori K."/>
            <person name="Kawamoto T."/>
            <person name="Nunoshiba T."/>
            <person name="Yamamoto Y."/>
            <person name="Aramaki H."/>
            <person name="Makino K."/>
            <person name="Suzuki M."/>
        </authorList>
    </citation>
    <scope>NUCLEOTIDE SEQUENCE [LARGE SCALE GENOMIC DNA]</scope>
    <source>
        <strain>ATCC 51530 / DSM 4299 / JCM 9571 / NBRC 15438 / GSS1</strain>
    </source>
</reference>
<dbReference type="EC" id="2.1.1.-" evidence="1"/>
<dbReference type="EMBL" id="BA000011">
    <property type="protein sequence ID" value="BAB60289.1"/>
    <property type="status" value="ALT_INIT"/>
    <property type="molecule type" value="Genomic_DNA"/>
</dbReference>
<dbReference type="RefSeq" id="WP_010917381.1">
    <property type="nucleotide sequence ID" value="NC_002689.2"/>
</dbReference>
<dbReference type="SMR" id="Q979L4"/>
<dbReference type="STRING" id="273116.gene:9381946"/>
<dbReference type="PaxDb" id="273116-14325385"/>
<dbReference type="DNASU" id="1441263"/>
<dbReference type="GeneID" id="1441263"/>
<dbReference type="KEGG" id="tvo:TVG1176554"/>
<dbReference type="eggNOG" id="arCOG01876">
    <property type="taxonomic scope" value="Archaea"/>
</dbReference>
<dbReference type="HOGENOM" id="CLU_040013_3_2_2"/>
<dbReference type="OrthoDB" id="17656at2157"/>
<dbReference type="PhylomeDB" id="Q979L4"/>
<dbReference type="UniPathway" id="UPA00051"/>
<dbReference type="Proteomes" id="UP000001017">
    <property type="component" value="Chromosome"/>
</dbReference>
<dbReference type="GO" id="GO:0003871">
    <property type="term" value="F:5-methyltetrahydropteroyltriglutamate-homocysteine S-methyltransferase activity"/>
    <property type="evidence" value="ECO:0007669"/>
    <property type="project" value="InterPro"/>
</dbReference>
<dbReference type="GO" id="GO:0008270">
    <property type="term" value="F:zinc ion binding"/>
    <property type="evidence" value="ECO:0007669"/>
    <property type="project" value="InterPro"/>
</dbReference>
<dbReference type="GO" id="GO:0009086">
    <property type="term" value="P:methionine biosynthetic process"/>
    <property type="evidence" value="ECO:0007669"/>
    <property type="project" value="UniProtKB-UniRule"/>
</dbReference>
<dbReference type="GO" id="GO:0032259">
    <property type="term" value="P:methylation"/>
    <property type="evidence" value="ECO:0007669"/>
    <property type="project" value="UniProtKB-KW"/>
</dbReference>
<dbReference type="CDD" id="cd03311">
    <property type="entry name" value="CIMS_C_terminal_like"/>
    <property type="match status" value="1"/>
</dbReference>
<dbReference type="Gene3D" id="3.20.20.210">
    <property type="match status" value="1"/>
</dbReference>
<dbReference type="HAMAP" id="MF_00288">
    <property type="entry name" value="MetE"/>
    <property type="match status" value="1"/>
</dbReference>
<dbReference type="InterPro" id="IPR002629">
    <property type="entry name" value="Met_Synth_C/arc"/>
</dbReference>
<dbReference type="InterPro" id="IPR022921">
    <property type="entry name" value="MetE_arc"/>
</dbReference>
<dbReference type="InterPro" id="IPR038071">
    <property type="entry name" value="UROD/MetE-like_sf"/>
</dbReference>
<dbReference type="NCBIfam" id="NF002272">
    <property type="entry name" value="PRK01207.1"/>
    <property type="match status" value="1"/>
</dbReference>
<dbReference type="PANTHER" id="PTHR30519">
    <property type="entry name" value="5-METHYLTETRAHYDROPTEROYLTRIGLUTAMATE--HOMOCYSTEINE METHYLTRANSFERASE"/>
    <property type="match status" value="1"/>
</dbReference>
<dbReference type="Pfam" id="PF01717">
    <property type="entry name" value="Meth_synt_2"/>
    <property type="match status" value="1"/>
</dbReference>
<dbReference type="SUPFAM" id="SSF51726">
    <property type="entry name" value="UROD/MetE-like"/>
    <property type="match status" value="1"/>
</dbReference>